<feature type="chain" id="PRO_0000404586" description="E3 ubiquitin-protein ligase TRIM56">
    <location>
        <begin position="1"/>
        <end position="732"/>
    </location>
</feature>
<feature type="zinc finger region" description="RING-type" evidence="5">
    <location>
        <begin position="21"/>
        <end position="60"/>
    </location>
</feature>
<feature type="zinc finger region" description="B box-type" evidence="4">
    <location>
        <begin position="164"/>
        <end position="205"/>
    </location>
</feature>
<feature type="region of interest" description="Disordered" evidence="6">
    <location>
        <begin position="374"/>
        <end position="462"/>
    </location>
</feature>
<feature type="coiled-coil region" evidence="3">
    <location>
        <begin position="211"/>
        <end position="286"/>
    </location>
</feature>
<feature type="compositionally biased region" description="Basic and acidic residues" evidence="6">
    <location>
        <begin position="374"/>
        <end position="384"/>
    </location>
</feature>
<feature type="compositionally biased region" description="Polar residues" evidence="6">
    <location>
        <begin position="389"/>
        <end position="405"/>
    </location>
</feature>
<feature type="compositionally biased region" description="Basic and acidic residues" evidence="6">
    <location>
        <begin position="407"/>
        <end position="416"/>
    </location>
</feature>
<feature type="compositionally biased region" description="Basic residues" evidence="6">
    <location>
        <begin position="434"/>
        <end position="446"/>
    </location>
</feature>
<feature type="binding site" evidence="4">
    <location>
        <position position="169"/>
    </location>
    <ligand>
        <name>Zn(2+)</name>
        <dbReference type="ChEBI" id="CHEBI:29105"/>
    </ligand>
</feature>
<feature type="binding site" evidence="4">
    <location>
        <position position="172"/>
    </location>
    <ligand>
        <name>Zn(2+)</name>
        <dbReference type="ChEBI" id="CHEBI:29105"/>
    </ligand>
</feature>
<feature type="binding site" evidence="4">
    <location>
        <position position="192"/>
    </location>
    <ligand>
        <name>Zn(2+)</name>
        <dbReference type="ChEBI" id="CHEBI:29105"/>
    </ligand>
</feature>
<feature type="binding site" evidence="4">
    <location>
        <position position="197"/>
    </location>
    <ligand>
        <name>Zn(2+)</name>
        <dbReference type="ChEBI" id="CHEBI:29105"/>
    </ligand>
</feature>
<feature type="modified residue" description="Phosphothreonine" evidence="2">
    <location>
        <position position="402"/>
    </location>
</feature>
<feature type="modified residue" description="Phosphothreonine" evidence="2">
    <location>
        <position position="419"/>
    </location>
</feature>
<feature type="modified residue" description="Phosphoserine" evidence="2">
    <location>
        <position position="452"/>
    </location>
</feature>
<proteinExistence type="evidence at transcript level"/>
<gene>
    <name evidence="8" type="primary">TRIM56</name>
</gene>
<dbReference type="EC" id="2.3.2.27" evidence="1"/>
<dbReference type="EMBL" id="AAFC03118057">
    <property type="status" value="NOT_ANNOTATED_CDS"/>
    <property type="molecule type" value="Genomic_DNA"/>
</dbReference>
<dbReference type="SMR" id="E1BD59"/>
<dbReference type="FunCoup" id="E1BD59">
    <property type="interactions" value="141"/>
</dbReference>
<dbReference type="PaxDb" id="9913-ENSBTAP00000015969"/>
<dbReference type="eggNOG" id="KOG2177">
    <property type="taxonomic scope" value="Eukaryota"/>
</dbReference>
<dbReference type="InParanoid" id="E1BD59"/>
<dbReference type="OrthoDB" id="264520at2759"/>
<dbReference type="UniPathway" id="UPA00143"/>
<dbReference type="Proteomes" id="UP000009136">
    <property type="component" value="Unplaced"/>
</dbReference>
<dbReference type="GO" id="GO:0005737">
    <property type="term" value="C:cytoplasm"/>
    <property type="evidence" value="ECO:0000250"/>
    <property type="project" value="UniProtKB"/>
</dbReference>
<dbReference type="GO" id="GO:0005654">
    <property type="term" value="C:nucleoplasm"/>
    <property type="evidence" value="ECO:0000318"/>
    <property type="project" value="GO_Central"/>
</dbReference>
<dbReference type="GO" id="GO:0061630">
    <property type="term" value="F:ubiquitin protein ligase activity"/>
    <property type="evidence" value="ECO:0000250"/>
    <property type="project" value="UniProtKB"/>
</dbReference>
<dbReference type="GO" id="GO:0008270">
    <property type="term" value="F:zinc ion binding"/>
    <property type="evidence" value="ECO:0007669"/>
    <property type="project" value="UniProtKB-KW"/>
</dbReference>
<dbReference type="GO" id="GO:0051607">
    <property type="term" value="P:defense response to virus"/>
    <property type="evidence" value="ECO:0000250"/>
    <property type="project" value="UniProtKB"/>
</dbReference>
<dbReference type="GO" id="GO:0045087">
    <property type="term" value="P:innate immune response"/>
    <property type="evidence" value="ECO:0000318"/>
    <property type="project" value="GO_Central"/>
</dbReference>
<dbReference type="GO" id="GO:0032728">
    <property type="term" value="P:positive regulation of interferon-beta production"/>
    <property type="evidence" value="ECO:0000250"/>
    <property type="project" value="UniProtKB"/>
</dbReference>
<dbReference type="GO" id="GO:0060340">
    <property type="term" value="P:positive regulation of type I interferon-mediated signaling pathway"/>
    <property type="evidence" value="ECO:0000318"/>
    <property type="project" value="GO_Central"/>
</dbReference>
<dbReference type="GO" id="GO:0070534">
    <property type="term" value="P:protein K63-linked ubiquitination"/>
    <property type="evidence" value="ECO:0000250"/>
    <property type="project" value="UniProtKB"/>
</dbReference>
<dbReference type="GO" id="GO:0034340">
    <property type="term" value="P:response to type I interferon"/>
    <property type="evidence" value="ECO:0000250"/>
    <property type="project" value="UniProtKB"/>
</dbReference>
<dbReference type="CDD" id="cd19810">
    <property type="entry name" value="Bbox1_TRIM56_C-V"/>
    <property type="match status" value="1"/>
</dbReference>
<dbReference type="CDD" id="cd19789">
    <property type="entry name" value="Bbox2_TRIM56_C-V"/>
    <property type="match status" value="1"/>
</dbReference>
<dbReference type="CDD" id="cd16584">
    <property type="entry name" value="RING-HC_TRIM56_C-V"/>
    <property type="match status" value="1"/>
</dbReference>
<dbReference type="FunFam" id="2.120.10.30:FF:000050">
    <property type="entry name" value="E3 ubiquitin-protein ligase TRIM56"/>
    <property type="match status" value="1"/>
</dbReference>
<dbReference type="FunFam" id="3.30.160.60:FF:001287">
    <property type="entry name" value="E3 ubiquitin-protein ligase TRIM56"/>
    <property type="match status" value="1"/>
</dbReference>
<dbReference type="FunFam" id="3.30.40.10:FF:000362">
    <property type="entry name" value="E3 ubiquitin-protein ligase TRIM56"/>
    <property type="match status" value="1"/>
</dbReference>
<dbReference type="Gene3D" id="3.30.160.60">
    <property type="entry name" value="Classic Zinc Finger"/>
    <property type="match status" value="1"/>
</dbReference>
<dbReference type="Gene3D" id="2.120.10.30">
    <property type="entry name" value="TolB, C-terminal domain"/>
    <property type="match status" value="1"/>
</dbReference>
<dbReference type="Gene3D" id="3.30.40.10">
    <property type="entry name" value="Zinc/RING finger domain, C3HC4 (zinc finger)"/>
    <property type="match status" value="1"/>
</dbReference>
<dbReference type="InterPro" id="IPR011042">
    <property type="entry name" value="6-blade_b-propeller_TolB-like"/>
</dbReference>
<dbReference type="InterPro" id="IPR047153">
    <property type="entry name" value="TRIM45/56/19-like"/>
</dbReference>
<dbReference type="InterPro" id="IPR027370">
    <property type="entry name" value="Znf-RING_euk"/>
</dbReference>
<dbReference type="InterPro" id="IPR000315">
    <property type="entry name" value="Znf_B-box"/>
</dbReference>
<dbReference type="InterPro" id="IPR001841">
    <property type="entry name" value="Znf_RING"/>
</dbReference>
<dbReference type="InterPro" id="IPR013083">
    <property type="entry name" value="Znf_RING/FYVE/PHD"/>
</dbReference>
<dbReference type="InterPro" id="IPR017907">
    <property type="entry name" value="Znf_RING_CS"/>
</dbReference>
<dbReference type="PANTHER" id="PTHR25462">
    <property type="entry name" value="BONUS, ISOFORM C-RELATED"/>
    <property type="match status" value="1"/>
</dbReference>
<dbReference type="PANTHER" id="PTHR25462:SF299">
    <property type="entry name" value="E3 UBIQUITIN-PROTEIN LIGASE TRIM56"/>
    <property type="match status" value="1"/>
</dbReference>
<dbReference type="Pfam" id="PF00643">
    <property type="entry name" value="zf-B_box"/>
    <property type="match status" value="1"/>
</dbReference>
<dbReference type="Pfam" id="PF13445">
    <property type="entry name" value="zf-RING_UBOX"/>
    <property type="match status" value="1"/>
</dbReference>
<dbReference type="SMART" id="SM00336">
    <property type="entry name" value="BBOX"/>
    <property type="match status" value="1"/>
</dbReference>
<dbReference type="SMART" id="SM00184">
    <property type="entry name" value="RING"/>
    <property type="match status" value="1"/>
</dbReference>
<dbReference type="SUPFAM" id="SSF57845">
    <property type="entry name" value="B-box zinc-binding domain"/>
    <property type="match status" value="1"/>
</dbReference>
<dbReference type="SUPFAM" id="SSF101898">
    <property type="entry name" value="NHL repeat"/>
    <property type="match status" value="1"/>
</dbReference>
<dbReference type="SUPFAM" id="SSF57850">
    <property type="entry name" value="RING/U-box"/>
    <property type="match status" value="1"/>
</dbReference>
<dbReference type="PROSITE" id="PS50119">
    <property type="entry name" value="ZF_BBOX"/>
    <property type="match status" value="1"/>
</dbReference>
<dbReference type="PROSITE" id="PS00518">
    <property type="entry name" value="ZF_RING_1"/>
    <property type="match status" value="1"/>
</dbReference>
<dbReference type="PROSITE" id="PS50089">
    <property type="entry name" value="ZF_RING_2"/>
    <property type="match status" value="1"/>
</dbReference>
<protein>
    <recommendedName>
        <fullName evidence="9">E3 ubiquitin-protein ligase TRIM56</fullName>
        <ecNumber evidence="1">2.3.2.27</ecNumber>
    </recommendedName>
    <alternativeName>
        <fullName>Tripartite motif-containing protein 56</fullName>
    </alternativeName>
</protein>
<name>TRI56_BOVIN</name>
<comment type="function">
    <text evidence="1 2 7">E3 ubiquitin-protein ligase that plays a key role in innate antiviral immunity by mediating ubiquitination of CGAS and STING1 (PubMed:21289118). In response to pathogen- and host-derived double-stranded DNA (dsDNA), targets STING1 to 'Lys-63'-linked ubiquitination, thereby promoting its homodimerization, a step required for the production of type I interferon IFN-beta (By similarity). Also mediate monoubiquitination of CGAS, thereby promoting CGAS oligomerization and subsequent activation (By similarity). Independently of its E3 ubiquitin ligase activity, positive regulator of TLR3 signaling. Potentiates extracellular double stranded RNA (dsRNA)-induced expression of IFNB1 and interferon-stimulated genes ISG15, IFIT1/ISG56, CXCL10, OASL and CCL5/RANTES (By similarity). Restricts bovine viral diarrhea virus (BVDV) replication (PubMed:21289118).</text>
</comment>
<comment type="catalytic activity">
    <reaction evidence="2">
        <text>S-ubiquitinyl-[E2 ubiquitin-conjugating enzyme]-L-cysteine + [acceptor protein]-L-lysine = [E2 ubiquitin-conjugating enzyme]-L-cysteine + N(6)-ubiquitinyl-[acceptor protein]-L-lysine.</text>
        <dbReference type="EC" id="2.3.2.27"/>
    </reaction>
</comment>
<comment type="pathway">
    <text evidence="1">Protein modification; protein ubiquitination.</text>
</comment>
<comment type="subunit">
    <text evidence="1 2">Interacts with STING1 (By similarity). Interacts with TICAM1 (By similarity).</text>
</comment>
<comment type="subcellular location">
    <subcellularLocation>
        <location evidence="1">Cytoplasm</location>
    </subcellularLocation>
</comment>
<comment type="induction">
    <text evidence="7">Up-regulated by IFN-alpha. Up-regulated in response to viral infection, including Sendai virus and bovine viral diarrhea virus.</text>
</comment>
<comment type="similarity">
    <text evidence="9">Belongs to the TRIM/RBCC family.</text>
</comment>
<evidence type="ECO:0000250" key="1">
    <source>
        <dbReference type="UniProtKB" id="Q80VI1"/>
    </source>
</evidence>
<evidence type="ECO:0000250" key="2">
    <source>
        <dbReference type="UniProtKB" id="Q9BRZ2"/>
    </source>
</evidence>
<evidence type="ECO:0000255" key="3"/>
<evidence type="ECO:0000255" key="4">
    <source>
        <dbReference type="PROSITE-ProRule" id="PRU00024"/>
    </source>
</evidence>
<evidence type="ECO:0000255" key="5">
    <source>
        <dbReference type="PROSITE-ProRule" id="PRU00175"/>
    </source>
</evidence>
<evidence type="ECO:0000256" key="6">
    <source>
        <dbReference type="SAM" id="MobiDB-lite"/>
    </source>
</evidence>
<evidence type="ECO:0000269" key="7">
    <source>
    </source>
</evidence>
<evidence type="ECO:0000303" key="8">
    <source>
    </source>
</evidence>
<evidence type="ECO:0000305" key="9"/>
<organism>
    <name type="scientific">Bos taurus</name>
    <name type="common">Bovine</name>
    <dbReference type="NCBI Taxonomy" id="9913"/>
    <lineage>
        <taxon>Eukaryota</taxon>
        <taxon>Metazoa</taxon>
        <taxon>Chordata</taxon>
        <taxon>Craniata</taxon>
        <taxon>Vertebrata</taxon>
        <taxon>Euteleostomi</taxon>
        <taxon>Mammalia</taxon>
        <taxon>Eutheria</taxon>
        <taxon>Laurasiatheria</taxon>
        <taxon>Artiodactyla</taxon>
        <taxon>Ruminantia</taxon>
        <taxon>Pecora</taxon>
        <taxon>Bovidae</taxon>
        <taxon>Bovinae</taxon>
        <taxon>Bos</taxon>
    </lineage>
</organism>
<reference key="1">
    <citation type="journal article" date="2009" name="Science">
        <title>The genome sequence of taurine cattle: a window to ruminant biology and evolution.</title>
        <authorList>
            <consortium name="The bovine genome sequencing and analysis consortium"/>
        </authorList>
    </citation>
    <scope>NUCLEOTIDE SEQUENCE [LARGE SCALE GENOMIC DNA]</scope>
</reference>
<reference key="2">
    <citation type="journal article" date="2011" name="J. Virol.">
        <title>TRIM56 is a virus- and interferon-inducible E3 ubiquitin ligase that restricts pestivirus infection.</title>
        <authorList>
            <person name="Wang J."/>
            <person name="Liu B."/>
            <person name="Wang N."/>
            <person name="Lee Y.M."/>
            <person name="Liu C."/>
            <person name="Li K."/>
        </authorList>
    </citation>
    <scope>FUNCTION</scope>
    <scope>INDUCTION BY IFN-ALPHA AND VIRAL INFECTION</scope>
</reference>
<sequence>MVSQGSSPSLLEALSSDFLACKICLEQLRVPKTLPCLHTYCQDCLAQLAEGSRLRCPECRESVPVPPAGVAAFKTNFFVNGLLDLVKARAGGDLRAGKPACALCPLMGGASAGGPATARCLDCADDLCQACADGHRCTRQTHSHRVVDLVGYRAGWYDEEARERQAAQCPQHPGEALRFLCQPCSQLLCRECRLDPHLDHPCLPLAEAVRARRPGLEELLAGVDNNLAELEATRLAEKEALARLREQAAKVVTQVEEASERVLRALLAQKQEVLGQLRAHVEAAEEGARERLGELEGQEQVAREAAAFARRVLSLGREAEILSLEGAIAQRLRQLQGCPWVPGPAPCQLPQLELYPGLLDKNCHLLRLSFEEQLPQKDSGKDGARSQGGDATQPQSRDGVQTPNQEDGAKTPKESRAQTPQEDGGTQARVGSRSNKKRKFKGRLKSVSREPSPAPGPNLEGSGLLPRPIFFCSFPTRMPGDKRAPRITGLCPFGSREILVADEQNRALKRFSLNGDYRGAVPVPEGCSPCSVAALQDTVAFSAAARLYLINHNGEVQWRRALSLCQASHAVAAMPSGDRVAVSVSGHVEVYNMEGSLATRFIPGGKANRGLRALVFLTTSPQGHFVGSDWQQNSLVVCDGLGQVVGEYRGPGLHGCQPGSVSVDKKGYIFLTLREVNKVVILDPKGSLLGDFLTAYHGLEKPRVTTMVDGRYLVVSLSNGTIHVFRVRPLDS</sequence>
<keyword id="KW-0051">Antiviral defense</keyword>
<keyword id="KW-0175">Coiled coil</keyword>
<keyword id="KW-0963">Cytoplasm</keyword>
<keyword id="KW-0391">Immunity</keyword>
<keyword id="KW-0399">Innate immunity</keyword>
<keyword id="KW-0479">Metal-binding</keyword>
<keyword id="KW-0597">Phosphoprotein</keyword>
<keyword id="KW-1185">Reference proteome</keyword>
<keyword id="KW-0677">Repeat</keyword>
<keyword id="KW-0808">Transferase</keyword>
<keyword id="KW-0833">Ubl conjugation pathway</keyword>
<keyword id="KW-0862">Zinc</keyword>
<keyword id="KW-0863">Zinc-finger</keyword>
<accession>E1BD59</accession>